<sequence length="295" mass="33787">MDEDFFLPDFSLVDIDFDFNIYEENNLSPDESLSNSRRADQSSKFDHQMHFECLREKPKAAVKPMMKINNKQQLISFDFSSNVISSPAAEEIIMDKLVGRGTKRKTCSHGTRSPVLAKEHVLAERKRREKLSEKFIALSALLPGLKKADKVTILDDAISRMKQLQEQLRTLKEEKEATRQMESMILVKKSKVFFDEEPNLSCSPSVHIEFDQALPEIEAKISQNDILIRILCEKSKGCMINILNTIENFQLRIENSIVLPFGDSTLDITVLAQMDKDFSMSILKDLVRNLRLAMV</sequence>
<organism>
    <name type="scientific">Arabidopsis thaliana</name>
    <name type="common">Mouse-ear cress</name>
    <dbReference type="NCBI Taxonomy" id="3702"/>
    <lineage>
        <taxon>Eukaryota</taxon>
        <taxon>Viridiplantae</taxon>
        <taxon>Streptophyta</taxon>
        <taxon>Embryophyta</taxon>
        <taxon>Tracheophyta</taxon>
        <taxon>Spermatophyta</taxon>
        <taxon>Magnoliopsida</taxon>
        <taxon>eudicotyledons</taxon>
        <taxon>Gunneridae</taxon>
        <taxon>Pentapetalae</taxon>
        <taxon>rosids</taxon>
        <taxon>malvids</taxon>
        <taxon>Brassicales</taxon>
        <taxon>Brassicaceae</taxon>
        <taxon>Camelineae</taxon>
        <taxon>Arabidopsis</taxon>
    </lineage>
</organism>
<dbReference type="EMBL" id="AF488563">
    <property type="protein sequence ID" value="AAM10935.1"/>
    <property type="molecule type" value="mRNA"/>
</dbReference>
<dbReference type="EMBL" id="AC005617">
    <property type="protein sequence ID" value="AAC63587.1"/>
    <property type="status" value="ALT_SEQ"/>
    <property type="molecule type" value="Genomic_DNA"/>
</dbReference>
<dbReference type="EMBL" id="AC006340">
    <property type="protein sequence ID" value="AAM15235.1"/>
    <property type="status" value="ALT_SEQ"/>
    <property type="molecule type" value="Genomic_DNA"/>
</dbReference>
<dbReference type="EMBL" id="CP002685">
    <property type="protein sequence ID" value="AEC07351.1"/>
    <property type="molecule type" value="Genomic_DNA"/>
</dbReference>
<dbReference type="EMBL" id="DQ446550">
    <property type="protein sequence ID" value="ABE65849.1"/>
    <property type="molecule type" value="mRNA"/>
</dbReference>
<dbReference type="EMBL" id="DQ653016">
    <property type="protein sequence ID" value="ABK28508.1"/>
    <property type="status" value="ALT_SEQ"/>
    <property type="molecule type" value="mRNA"/>
</dbReference>
<dbReference type="PIR" id="E84616">
    <property type="entry name" value="E84616"/>
</dbReference>
<dbReference type="RefSeq" id="NP_001323557.1">
    <property type="nucleotide sequence ID" value="NM_001335823.1"/>
</dbReference>
<dbReference type="RefSeq" id="NP_179861.2">
    <property type="nucleotide sequence ID" value="NM_127841.3"/>
</dbReference>
<dbReference type="SMR" id="Q1PF16"/>
<dbReference type="BioGRID" id="2159">
    <property type="interactions" value="17"/>
</dbReference>
<dbReference type="FunCoup" id="Q1PF16">
    <property type="interactions" value="11"/>
</dbReference>
<dbReference type="IntAct" id="Q1PF16">
    <property type="interactions" value="16"/>
</dbReference>
<dbReference type="STRING" id="3702.Q1PF16"/>
<dbReference type="iPTMnet" id="Q1PF16"/>
<dbReference type="PaxDb" id="3702-AT2G22760.1"/>
<dbReference type="EnsemblPlants" id="AT2G22760.1">
    <property type="protein sequence ID" value="AT2G22760.1"/>
    <property type="gene ID" value="AT2G22760"/>
</dbReference>
<dbReference type="GeneID" id="816806"/>
<dbReference type="Gramene" id="AT2G22760.1">
    <property type="protein sequence ID" value="AT2G22760.1"/>
    <property type="gene ID" value="AT2G22760"/>
</dbReference>
<dbReference type="KEGG" id="ath:AT2G22760"/>
<dbReference type="Araport" id="AT2G22760"/>
<dbReference type="TAIR" id="AT2G22760"/>
<dbReference type="eggNOG" id="ENOG502QUSQ">
    <property type="taxonomic scope" value="Eukaryota"/>
</dbReference>
<dbReference type="HOGENOM" id="CLU_046481_0_1_1"/>
<dbReference type="InParanoid" id="Q1PF16"/>
<dbReference type="OMA" id="SHAKFDQ"/>
<dbReference type="OrthoDB" id="690068at2759"/>
<dbReference type="PhylomeDB" id="Q1PF16"/>
<dbReference type="PRO" id="PR:Q1PF16"/>
<dbReference type="Proteomes" id="UP000006548">
    <property type="component" value="Chromosome 2"/>
</dbReference>
<dbReference type="ExpressionAtlas" id="Q1PF16">
    <property type="expression patterns" value="baseline and differential"/>
</dbReference>
<dbReference type="GO" id="GO:0005634">
    <property type="term" value="C:nucleus"/>
    <property type="evidence" value="ECO:0007669"/>
    <property type="project" value="UniProtKB-SubCell"/>
</dbReference>
<dbReference type="GO" id="GO:0003700">
    <property type="term" value="F:DNA-binding transcription factor activity"/>
    <property type="evidence" value="ECO:0000250"/>
    <property type="project" value="TAIR"/>
</dbReference>
<dbReference type="GO" id="GO:0046983">
    <property type="term" value="F:protein dimerization activity"/>
    <property type="evidence" value="ECO:0007669"/>
    <property type="project" value="InterPro"/>
</dbReference>
<dbReference type="GO" id="GO:0000976">
    <property type="term" value="F:transcription cis-regulatory region binding"/>
    <property type="evidence" value="ECO:0000353"/>
    <property type="project" value="TAIR"/>
</dbReference>
<dbReference type="GO" id="GO:0006355">
    <property type="term" value="P:regulation of DNA-templated transcription"/>
    <property type="evidence" value="ECO:0000304"/>
    <property type="project" value="TAIR"/>
</dbReference>
<dbReference type="CDD" id="cd11452">
    <property type="entry name" value="bHLH_AtNAI1_like"/>
    <property type="match status" value="1"/>
</dbReference>
<dbReference type="Gene3D" id="4.10.280.10">
    <property type="entry name" value="Helix-loop-helix DNA-binding domain"/>
    <property type="match status" value="1"/>
</dbReference>
<dbReference type="InterPro" id="IPR011598">
    <property type="entry name" value="bHLH_dom"/>
</dbReference>
<dbReference type="InterPro" id="IPR052610">
    <property type="entry name" value="bHLH_transcription_regulator"/>
</dbReference>
<dbReference type="InterPro" id="IPR036638">
    <property type="entry name" value="HLH_DNA-bd_sf"/>
</dbReference>
<dbReference type="PANTHER" id="PTHR45959">
    <property type="entry name" value="BHLH TRANSCRIPTION FACTOR"/>
    <property type="match status" value="1"/>
</dbReference>
<dbReference type="PANTHER" id="PTHR45959:SF17">
    <property type="entry name" value="TRANSCRIPTION FACTOR BHLH19"/>
    <property type="match status" value="1"/>
</dbReference>
<dbReference type="Pfam" id="PF00010">
    <property type="entry name" value="HLH"/>
    <property type="match status" value="1"/>
</dbReference>
<dbReference type="SMART" id="SM00353">
    <property type="entry name" value="HLH"/>
    <property type="match status" value="1"/>
</dbReference>
<dbReference type="SUPFAM" id="SSF47459">
    <property type="entry name" value="HLH, helix-loop-helix DNA-binding domain"/>
    <property type="match status" value="1"/>
</dbReference>
<dbReference type="PROSITE" id="PS50888">
    <property type="entry name" value="BHLH"/>
    <property type="match status" value="1"/>
</dbReference>
<gene>
    <name type="primary">BHLH19</name>
    <name type="synonym">EN26</name>
    <name type="ordered locus">At2g22760</name>
    <name type="ORF">T30L20.2</name>
</gene>
<keyword id="KW-0238">DNA-binding</keyword>
<keyword id="KW-0539">Nucleus</keyword>
<keyword id="KW-1185">Reference proteome</keyword>
<keyword id="KW-0804">Transcription</keyword>
<keyword id="KW-0805">Transcription regulation</keyword>
<proteinExistence type="evidence at protein level"/>
<accession>Q1PF16</accession>
<accession>A0MEP4</accession>
<accession>O82397</accession>
<accession>Q8S3F2</accession>
<feature type="chain" id="PRO_0000358733" description="Transcription factor bHLH19">
    <location>
        <begin position="1"/>
        <end position="295"/>
    </location>
</feature>
<feature type="domain" description="bHLH" evidence="1">
    <location>
        <begin position="115"/>
        <end position="164"/>
    </location>
</feature>
<feature type="sequence conflict" description="In Ref. 1; AAM10935." evidence="3" ref="1">
    <original>L</original>
    <variation>P</variation>
    <location>
        <position position="292"/>
    </location>
</feature>
<protein>
    <recommendedName>
        <fullName>Transcription factor bHLH19</fullName>
    </recommendedName>
    <alternativeName>
        <fullName>Basic helix-loop-helix protein 19</fullName>
        <shortName>AtbHLH19</shortName>
        <shortName>bHLH 19</shortName>
    </alternativeName>
    <alternativeName>
        <fullName>Transcription factor EN 26</fullName>
    </alternativeName>
    <alternativeName>
        <fullName>bHLH transcription factor bHLH019</fullName>
    </alternativeName>
</protein>
<evidence type="ECO:0000255" key="1">
    <source>
        <dbReference type="PROSITE-ProRule" id="PRU00981"/>
    </source>
</evidence>
<evidence type="ECO:0000269" key="2">
    <source>
    </source>
</evidence>
<evidence type="ECO:0000305" key="3"/>
<comment type="subunit">
    <text evidence="3">Homodimer.</text>
</comment>
<comment type="interaction">
    <interactant intactId="EBI-2367867">
        <id>Q1PF16</id>
    </interactant>
    <interactant intactId="EBI-1573499">
        <id>Q9LNW3</id>
        <label>AIP1</label>
    </interactant>
    <organismsDiffer>false</organismsDiffer>
    <experiments>3</experiments>
</comment>
<comment type="interaction">
    <interactant intactId="EBI-2367867">
        <id>Q1PF16</id>
    </interactant>
    <interactant intactId="EBI-25522944">
        <id>Q9ZT48</id>
        <label>ATE1</label>
    </interactant>
    <organismsDiffer>false</organismsDiffer>
    <experiments>3</experiments>
</comment>
<comment type="interaction">
    <interactant intactId="EBI-2367867">
        <id>Q1PF16</id>
    </interactant>
    <interactant intactId="EBI-1537394">
        <id>F4IP06</id>
        <label>SWC2</label>
    </interactant>
    <organismsDiffer>false</organismsDiffer>
    <experiments>3</experiments>
</comment>
<comment type="subcellular location">
    <subcellularLocation>
        <location evidence="1">Nucleus</location>
    </subcellularLocation>
</comment>
<comment type="tissue specificity">
    <text evidence="2">Expressed in roots and leaves.</text>
</comment>
<comment type="induction">
    <text evidence="2">By cold treatment.</text>
</comment>
<comment type="sequence caution" evidence="3">
    <conflict type="erroneous gene model prediction">
        <sequence resource="EMBL-CDS" id="AAC63587"/>
    </conflict>
</comment>
<comment type="sequence caution" evidence="3">
    <conflict type="erroneous gene model prediction">
        <sequence resource="EMBL-CDS" id="AAM15235"/>
    </conflict>
</comment>
<comment type="sequence caution" evidence="3">
    <conflict type="erroneous termination">
        <sequence resource="EMBL-CDS" id="ABK28508"/>
    </conflict>
    <text>Extended C-terminus.</text>
</comment>
<reference key="1">
    <citation type="journal article" date="2003" name="Mol. Biol. Evol.">
        <title>The basic helix-loop-helix transcription factor family in plants: a genome-wide study of protein structure and functional diversity.</title>
        <authorList>
            <person name="Heim M.A."/>
            <person name="Jakoby M."/>
            <person name="Werber M."/>
            <person name="Martin C."/>
            <person name="Weisshaar B."/>
            <person name="Bailey P.C."/>
        </authorList>
    </citation>
    <scope>NUCLEOTIDE SEQUENCE [MRNA]</scope>
    <scope>TISSUE SPECIFICITY</scope>
    <scope>INDUCTION BY COLD</scope>
    <scope>GENE FAMILY</scope>
    <scope>NOMENCLATURE</scope>
    <source>
        <strain>cv. Columbia</strain>
    </source>
</reference>
<reference key="2">
    <citation type="journal article" date="1999" name="Nature">
        <title>Sequence and analysis of chromosome 2 of the plant Arabidopsis thaliana.</title>
        <authorList>
            <person name="Lin X."/>
            <person name="Kaul S."/>
            <person name="Rounsley S.D."/>
            <person name="Shea T.P."/>
            <person name="Benito M.-I."/>
            <person name="Town C.D."/>
            <person name="Fujii C.Y."/>
            <person name="Mason T.M."/>
            <person name="Bowman C.L."/>
            <person name="Barnstead M.E."/>
            <person name="Feldblyum T.V."/>
            <person name="Buell C.R."/>
            <person name="Ketchum K.A."/>
            <person name="Lee J.J."/>
            <person name="Ronning C.M."/>
            <person name="Koo H.L."/>
            <person name="Moffat K.S."/>
            <person name="Cronin L.A."/>
            <person name="Shen M."/>
            <person name="Pai G."/>
            <person name="Van Aken S."/>
            <person name="Umayam L."/>
            <person name="Tallon L.J."/>
            <person name="Gill J.E."/>
            <person name="Adams M.D."/>
            <person name="Carrera A.J."/>
            <person name="Creasy T.H."/>
            <person name="Goodman H.M."/>
            <person name="Somerville C.R."/>
            <person name="Copenhaver G.P."/>
            <person name="Preuss D."/>
            <person name="Nierman W.C."/>
            <person name="White O."/>
            <person name="Eisen J.A."/>
            <person name="Salzberg S.L."/>
            <person name="Fraser C.M."/>
            <person name="Venter J.C."/>
        </authorList>
    </citation>
    <scope>NUCLEOTIDE SEQUENCE [LARGE SCALE GENOMIC DNA]</scope>
    <source>
        <strain>cv. Columbia</strain>
    </source>
</reference>
<reference key="3">
    <citation type="journal article" date="2017" name="Plant J.">
        <title>Araport11: a complete reannotation of the Arabidopsis thaliana reference genome.</title>
        <authorList>
            <person name="Cheng C.Y."/>
            <person name="Krishnakumar V."/>
            <person name="Chan A.P."/>
            <person name="Thibaud-Nissen F."/>
            <person name="Schobel S."/>
            <person name="Town C.D."/>
        </authorList>
    </citation>
    <scope>GENOME REANNOTATION</scope>
    <source>
        <strain>cv. Columbia</strain>
    </source>
</reference>
<reference key="4">
    <citation type="journal article" date="2006" name="Plant Biotechnol. J.">
        <title>Simultaneous high-throughput recombinational cloning of open reading frames in closed and open configurations.</title>
        <authorList>
            <person name="Underwood B.A."/>
            <person name="Vanderhaeghen R."/>
            <person name="Whitford R."/>
            <person name="Town C.D."/>
            <person name="Hilson P."/>
        </authorList>
    </citation>
    <scope>NUCLEOTIDE SEQUENCE [LARGE SCALE MRNA]</scope>
    <source>
        <strain>cv. Columbia</strain>
    </source>
</reference>
<reference key="5">
    <citation type="journal article" date="2003" name="Plant Cell">
        <title>The Arabidopsis basic/helix-loop-helix transcription factor family.</title>
        <authorList>
            <person name="Toledo-Ortiz G."/>
            <person name="Huq E."/>
            <person name="Quail P.H."/>
        </authorList>
    </citation>
    <scope>GENE FAMILY</scope>
</reference>
<reference key="6">
    <citation type="journal article" date="2003" name="Plant Cell">
        <title>Update on the basic helix-loop-helix transcription factor gene family in Arabidopsis thaliana.</title>
        <authorList>
            <person name="Bailey P.C."/>
            <person name="Martin C."/>
            <person name="Toledo-Ortiz G."/>
            <person name="Quail P.H."/>
            <person name="Huq E."/>
            <person name="Heim M.A."/>
            <person name="Jakoby M."/>
            <person name="Werber M."/>
            <person name="Weisshaar B."/>
        </authorList>
    </citation>
    <scope>GENE FAMILY</scope>
    <scope>NOMENCLATURE</scope>
</reference>
<name>BH019_ARATH</name>